<feature type="chain" id="PRO_0000074743" description="Sensor histidine kinase CssS">
    <location>
        <begin position="1"/>
        <end position="451"/>
    </location>
</feature>
<feature type="topological domain" description="Cytoplasmic" evidence="1">
    <location>
        <begin position="1"/>
        <end position="9"/>
    </location>
</feature>
<feature type="transmembrane region" description="Helical" evidence="1">
    <location>
        <begin position="10"/>
        <end position="30"/>
    </location>
</feature>
<feature type="topological domain" description="Extracellular" evidence="1">
    <location>
        <begin position="31"/>
        <end position="165"/>
    </location>
</feature>
<feature type="transmembrane region" description="Helical" evidence="1">
    <location>
        <begin position="166"/>
        <end position="186"/>
    </location>
</feature>
<feature type="topological domain" description="Cytoplasmic" evidence="1">
    <location>
        <begin position="187"/>
        <end position="451"/>
    </location>
</feature>
<feature type="domain" description="HAMP" evidence="2">
    <location>
        <begin position="187"/>
        <end position="239"/>
    </location>
</feature>
<feature type="domain" description="Histidine kinase" evidence="3">
    <location>
        <begin position="247"/>
        <end position="451"/>
    </location>
</feature>
<feature type="modified residue" description="Phosphohistidine; by autocatalysis" evidence="3">
    <location>
        <position position="250"/>
    </location>
</feature>
<feature type="sequence conflict" description="In Ref. 2; CAA11751." evidence="5" ref="2">
    <original>T</original>
    <variation>S</variation>
    <location>
        <position position="444"/>
    </location>
</feature>
<protein>
    <recommendedName>
        <fullName>Sensor histidine kinase CssS</fullName>
        <ecNumber>2.7.13.3</ecNumber>
    </recommendedName>
</protein>
<dbReference type="EC" id="2.7.13.3"/>
<dbReference type="EMBL" id="Z93941">
    <property type="protein sequence ID" value="CAB07976.1"/>
    <property type="status" value="ALT_INIT"/>
    <property type="molecule type" value="Genomic_DNA"/>
</dbReference>
<dbReference type="EMBL" id="AJ223978">
    <property type="protein sequence ID" value="CAA11751.1"/>
    <property type="molecule type" value="Genomic_DNA"/>
</dbReference>
<dbReference type="EMBL" id="AL009126">
    <property type="protein sequence ID" value="CAB15292.2"/>
    <property type="molecule type" value="Genomic_DNA"/>
</dbReference>
<dbReference type="PIR" id="D70045">
    <property type="entry name" value="D70045"/>
</dbReference>
<dbReference type="RefSeq" id="NP_391182.2">
    <property type="nucleotide sequence ID" value="NC_000964.3"/>
</dbReference>
<dbReference type="RefSeq" id="WP_003228527.1">
    <property type="nucleotide sequence ID" value="NZ_OZ025638.1"/>
</dbReference>
<dbReference type="SMR" id="O32193"/>
<dbReference type="FunCoup" id="O32193">
    <property type="interactions" value="132"/>
</dbReference>
<dbReference type="IntAct" id="O32193">
    <property type="interactions" value="16"/>
</dbReference>
<dbReference type="STRING" id="224308.BSU33020"/>
<dbReference type="PaxDb" id="224308-BSU33020"/>
<dbReference type="EnsemblBacteria" id="CAB15292">
    <property type="protein sequence ID" value="CAB15292"/>
    <property type="gene ID" value="BSU_33020"/>
</dbReference>
<dbReference type="GeneID" id="935936"/>
<dbReference type="KEGG" id="bsu:BSU33020"/>
<dbReference type="PATRIC" id="fig|224308.179.peg.3578"/>
<dbReference type="eggNOG" id="COG2205">
    <property type="taxonomic scope" value="Bacteria"/>
</dbReference>
<dbReference type="eggNOG" id="COG2770">
    <property type="taxonomic scope" value="Bacteria"/>
</dbReference>
<dbReference type="InParanoid" id="O32193"/>
<dbReference type="OrthoDB" id="9780718at2"/>
<dbReference type="PhylomeDB" id="O32193"/>
<dbReference type="BioCyc" id="BSUB:BSU33020-MONOMER"/>
<dbReference type="BRENDA" id="2.7.13.3">
    <property type="organism ID" value="658"/>
</dbReference>
<dbReference type="Proteomes" id="UP000001570">
    <property type="component" value="Chromosome"/>
</dbReference>
<dbReference type="GO" id="GO:0005886">
    <property type="term" value="C:plasma membrane"/>
    <property type="evidence" value="ECO:0000318"/>
    <property type="project" value="GO_Central"/>
</dbReference>
<dbReference type="GO" id="GO:0005524">
    <property type="term" value="F:ATP binding"/>
    <property type="evidence" value="ECO:0007669"/>
    <property type="project" value="UniProtKB-KW"/>
</dbReference>
<dbReference type="GO" id="GO:0000155">
    <property type="term" value="F:phosphorelay sensor kinase activity"/>
    <property type="evidence" value="ECO:0000318"/>
    <property type="project" value="GO_Central"/>
</dbReference>
<dbReference type="CDD" id="cd06225">
    <property type="entry name" value="HAMP"/>
    <property type="match status" value="1"/>
</dbReference>
<dbReference type="CDD" id="cd00082">
    <property type="entry name" value="HisKA"/>
    <property type="match status" value="1"/>
</dbReference>
<dbReference type="FunFam" id="1.10.287.130:FF:000073">
    <property type="entry name" value="Two-component sensor histidine kinase"/>
    <property type="match status" value="1"/>
</dbReference>
<dbReference type="Gene3D" id="1.10.287.130">
    <property type="match status" value="1"/>
</dbReference>
<dbReference type="Gene3D" id="6.10.340.10">
    <property type="match status" value="1"/>
</dbReference>
<dbReference type="Gene3D" id="3.30.565.10">
    <property type="entry name" value="Histidine kinase-like ATPase, C-terminal domain"/>
    <property type="match status" value="1"/>
</dbReference>
<dbReference type="InterPro" id="IPR050398">
    <property type="entry name" value="Bact_Sensor_His_Kinase"/>
</dbReference>
<dbReference type="InterPro" id="IPR003660">
    <property type="entry name" value="HAMP_dom"/>
</dbReference>
<dbReference type="InterPro" id="IPR036890">
    <property type="entry name" value="HATPase_C_sf"/>
</dbReference>
<dbReference type="InterPro" id="IPR005467">
    <property type="entry name" value="His_kinase_dom"/>
</dbReference>
<dbReference type="InterPro" id="IPR003661">
    <property type="entry name" value="HisK_dim/P_dom"/>
</dbReference>
<dbReference type="InterPro" id="IPR036097">
    <property type="entry name" value="HisK_dim/P_sf"/>
</dbReference>
<dbReference type="InterPro" id="IPR004358">
    <property type="entry name" value="Sig_transdc_His_kin-like_C"/>
</dbReference>
<dbReference type="PANTHER" id="PTHR45528">
    <property type="entry name" value="SENSOR HISTIDINE KINASE CPXA"/>
    <property type="match status" value="1"/>
</dbReference>
<dbReference type="PANTHER" id="PTHR45528:SF1">
    <property type="entry name" value="SENSOR HISTIDINE KINASE CPXA"/>
    <property type="match status" value="1"/>
</dbReference>
<dbReference type="Pfam" id="PF00672">
    <property type="entry name" value="HAMP"/>
    <property type="match status" value="1"/>
</dbReference>
<dbReference type="Pfam" id="PF02518">
    <property type="entry name" value="HATPase_c"/>
    <property type="match status" value="1"/>
</dbReference>
<dbReference type="Pfam" id="PF00512">
    <property type="entry name" value="HisKA"/>
    <property type="match status" value="1"/>
</dbReference>
<dbReference type="PRINTS" id="PR00344">
    <property type="entry name" value="BCTRLSENSOR"/>
</dbReference>
<dbReference type="SMART" id="SM00304">
    <property type="entry name" value="HAMP"/>
    <property type="match status" value="1"/>
</dbReference>
<dbReference type="SMART" id="SM00387">
    <property type="entry name" value="HATPase_c"/>
    <property type="match status" value="1"/>
</dbReference>
<dbReference type="SMART" id="SM00388">
    <property type="entry name" value="HisKA"/>
    <property type="match status" value="1"/>
</dbReference>
<dbReference type="SUPFAM" id="SSF55874">
    <property type="entry name" value="ATPase domain of HSP90 chaperone/DNA topoisomerase II/histidine kinase"/>
    <property type="match status" value="1"/>
</dbReference>
<dbReference type="SUPFAM" id="SSF158472">
    <property type="entry name" value="HAMP domain-like"/>
    <property type="match status" value="1"/>
</dbReference>
<dbReference type="SUPFAM" id="SSF47384">
    <property type="entry name" value="Homodimeric domain of signal transducing histidine kinase"/>
    <property type="match status" value="1"/>
</dbReference>
<dbReference type="PROSITE" id="PS50885">
    <property type="entry name" value="HAMP"/>
    <property type="match status" value="1"/>
</dbReference>
<dbReference type="PROSITE" id="PS50109">
    <property type="entry name" value="HIS_KIN"/>
    <property type="match status" value="1"/>
</dbReference>
<comment type="function">
    <text evidence="4">Member of the two-component regulatory system CssS/CssR required to control the cellular response to secretion stress. Required for the transcription of htrA. Could detect misfolded proteins at the membrane-cell wall interface and then activate CssR by phosphorylation.</text>
</comment>
<comment type="catalytic activity">
    <reaction>
        <text>ATP + protein L-histidine = ADP + protein N-phospho-L-histidine.</text>
        <dbReference type="EC" id="2.7.13.3"/>
    </reaction>
</comment>
<comment type="subcellular location">
    <subcellularLocation>
        <location evidence="5">Cell membrane</location>
        <topology evidence="5">Multi-pass membrane protein</topology>
    </subcellularLocation>
</comment>
<comment type="sequence caution" evidence="5">
    <conflict type="erroneous initiation">
        <sequence resource="EMBL-CDS" id="CAB07976"/>
    </conflict>
</comment>
<accession>O32193</accession>
<accession>O32303</accession>
<sequence length="451" mass="52097">MKNKPLAFQIWVVISGILLAISILLLVLFSNTLRDFFTNETYTTIENEQHVLTEYRLPGSIERRYYSEEATAPTTVRSVQHVLLPENEEASSDKDLSILSSSFIHKVYKLADKQEAKKKRYSADVNGEKVFFVIKKGLSVNGQSAMMLSYALDSYRDDLAYTLFKQLLFIIAVVILLSWIPAIWLAKYLSRPLVSFEKHVKRISEQDWDDPVKVDRKDEIGKLGHTIEEMRQKLVQKDETERTLLQNISHDLKTPVMVIRGYTQSIKDGIFPKGDLENTVDVIECEALKLEKKIKDLLYLTKLDYLAKQKVQHDMFSIVEVTEEVIERLKWARKELSWEIDVEEDILMPGDPEQWNKLLENILENQIRYAETKIEISMKQDDRNIVITIKNDGPHIEDEMLSSLYEPFNKGKKGEFGIGLSIVKRILTLHKASISIENDKTGVTYRIAVPK</sequence>
<organism>
    <name type="scientific">Bacillus subtilis (strain 168)</name>
    <dbReference type="NCBI Taxonomy" id="224308"/>
    <lineage>
        <taxon>Bacteria</taxon>
        <taxon>Bacillati</taxon>
        <taxon>Bacillota</taxon>
        <taxon>Bacilli</taxon>
        <taxon>Bacillales</taxon>
        <taxon>Bacillaceae</taxon>
        <taxon>Bacillus</taxon>
    </lineage>
</organism>
<gene>
    <name type="primary">cssS</name>
    <name type="synonym">yvqB</name>
    <name type="ordered locus">BSU33020</name>
</gene>
<keyword id="KW-0067">ATP-binding</keyword>
<keyword id="KW-1003">Cell membrane</keyword>
<keyword id="KW-0418">Kinase</keyword>
<keyword id="KW-0472">Membrane</keyword>
<keyword id="KW-0547">Nucleotide-binding</keyword>
<keyword id="KW-0597">Phosphoprotein</keyword>
<keyword id="KW-1185">Reference proteome</keyword>
<keyword id="KW-0808">Transferase</keyword>
<keyword id="KW-0812">Transmembrane</keyword>
<keyword id="KW-1133">Transmembrane helix</keyword>
<keyword id="KW-0902">Two-component regulatory system</keyword>
<reference key="1">
    <citation type="journal article" date="1997" name="Microbiology">
        <title>Sequencing of regions downstream of addA (98 degrees) and citG (289 degrees) in Bacillus subtilis.</title>
        <authorList>
            <person name="Medina N."/>
            <person name="Vannier F."/>
            <person name="Roche B."/>
            <person name="Autret S."/>
            <person name="Levine A."/>
            <person name="Seror S.J."/>
        </authorList>
    </citation>
    <scope>NUCLEOTIDE SEQUENCE [GENOMIC DNA]</scope>
</reference>
<reference key="2">
    <citation type="journal article" date="1998" name="Microbiology">
        <title>The yvsA-yvqA (293 degrees - 289 degrees) region of the Bacillus subtilis chromosome containing genes involved in metal ion uptake and a putative sigma factor.</title>
        <authorList>
            <person name="Wipat A."/>
            <person name="Brignell C.S."/>
            <person name="Guy J.B."/>
            <person name="Rose M."/>
            <person name="Emmerson P.T."/>
            <person name="Harwood C.R."/>
        </authorList>
    </citation>
    <scope>NUCLEOTIDE SEQUENCE [GENOMIC DNA]</scope>
    <source>
        <strain>168</strain>
    </source>
</reference>
<reference key="3">
    <citation type="journal article" date="1997" name="Nature">
        <title>The complete genome sequence of the Gram-positive bacterium Bacillus subtilis.</title>
        <authorList>
            <person name="Kunst F."/>
            <person name="Ogasawara N."/>
            <person name="Moszer I."/>
            <person name="Albertini A.M."/>
            <person name="Alloni G."/>
            <person name="Azevedo V."/>
            <person name="Bertero M.G."/>
            <person name="Bessieres P."/>
            <person name="Bolotin A."/>
            <person name="Borchert S."/>
            <person name="Borriss R."/>
            <person name="Boursier L."/>
            <person name="Brans A."/>
            <person name="Braun M."/>
            <person name="Brignell S.C."/>
            <person name="Bron S."/>
            <person name="Brouillet S."/>
            <person name="Bruschi C.V."/>
            <person name="Caldwell B."/>
            <person name="Capuano V."/>
            <person name="Carter N.M."/>
            <person name="Choi S.-K."/>
            <person name="Codani J.-J."/>
            <person name="Connerton I.F."/>
            <person name="Cummings N.J."/>
            <person name="Daniel R.A."/>
            <person name="Denizot F."/>
            <person name="Devine K.M."/>
            <person name="Duesterhoeft A."/>
            <person name="Ehrlich S.D."/>
            <person name="Emmerson P.T."/>
            <person name="Entian K.-D."/>
            <person name="Errington J."/>
            <person name="Fabret C."/>
            <person name="Ferrari E."/>
            <person name="Foulger D."/>
            <person name="Fritz C."/>
            <person name="Fujita M."/>
            <person name="Fujita Y."/>
            <person name="Fuma S."/>
            <person name="Galizzi A."/>
            <person name="Galleron N."/>
            <person name="Ghim S.-Y."/>
            <person name="Glaser P."/>
            <person name="Goffeau A."/>
            <person name="Golightly E.J."/>
            <person name="Grandi G."/>
            <person name="Guiseppi G."/>
            <person name="Guy B.J."/>
            <person name="Haga K."/>
            <person name="Haiech J."/>
            <person name="Harwood C.R."/>
            <person name="Henaut A."/>
            <person name="Hilbert H."/>
            <person name="Holsappel S."/>
            <person name="Hosono S."/>
            <person name="Hullo M.-F."/>
            <person name="Itaya M."/>
            <person name="Jones L.-M."/>
            <person name="Joris B."/>
            <person name="Karamata D."/>
            <person name="Kasahara Y."/>
            <person name="Klaerr-Blanchard M."/>
            <person name="Klein C."/>
            <person name="Kobayashi Y."/>
            <person name="Koetter P."/>
            <person name="Koningstein G."/>
            <person name="Krogh S."/>
            <person name="Kumano M."/>
            <person name="Kurita K."/>
            <person name="Lapidus A."/>
            <person name="Lardinois S."/>
            <person name="Lauber J."/>
            <person name="Lazarevic V."/>
            <person name="Lee S.-M."/>
            <person name="Levine A."/>
            <person name="Liu H."/>
            <person name="Masuda S."/>
            <person name="Mauel C."/>
            <person name="Medigue C."/>
            <person name="Medina N."/>
            <person name="Mellado R.P."/>
            <person name="Mizuno M."/>
            <person name="Moestl D."/>
            <person name="Nakai S."/>
            <person name="Noback M."/>
            <person name="Noone D."/>
            <person name="O'Reilly M."/>
            <person name="Ogawa K."/>
            <person name="Ogiwara A."/>
            <person name="Oudega B."/>
            <person name="Park S.-H."/>
            <person name="Parro V."/>
            <person name="Pohl T.M."/>
            <person name="Portetelle D."/>
            <person name="Porwollik S."/>
            <person name="Prescott A.M."/>
            <person name="Presecan E."/>
            <person name="Pujic P."/>
            <person name="Purnelle B."/>
            <person name="Rapoport G."/>
            <person name="Rey M."/>
            <person name="Reynolds S."/>
            <person name="Rieger M."/>
            <person name="Rivolta C."/>
            <person name="Rocha E."/>
            <person name="Roche B."/>
            <person name="Rose M."/>
            <person name="Sadaie Y."/>
            <person name="Sato T."/>
            <person name="Scanlan E."/>
            <person name="Schleich S."/>
            <person name="Schroeter R."/>
            <person name="Scoffone F."/>
            <person name="Sekiguchi J."/>
            <person name="Sekowska A."/>
            <person name="Seror S.J."/>
            <person name="Serror P."/>
            <person name="Shin B.-S."/>
            <person name="Soldo B."/>
            <person name="Sorokin A."/>
            <person name="Tacconi E."/>
            <person name="Takagi T."/>
            <person name="Takahashi H."/>
            <person name="Takemaru K."/>
            <person name="Takeuchi M."/>
            <person name="Tamakoshi A."/>
            <person name="Tanaka T."/>
            <person name="Terpstra P."/>
            <person name="Tognoni A."/>
            <person name="Tosato V."/>
            <person name="Uchiyama S."/>
            <person name="Vandenbol M."/>
            <person name="Vannier F."/>
            <person name="Vassarotti A."/>
            <person name="Viari A."/>
            <person name="Wambutt R."/>
            <person name="Wedler E."/>
            <person name="Wedler H."/>
            <person name="Weitzenegger T."/>
            <person name="Winters P."/>
            <person name="Wipat A."/>
            <person name="Yamamoto H."/>
            <person name="Yamane K."/>
            <person name="Yasumoto K."/>
            <person name="Yata K."/>
            <person name="Yoshida K."/>
            <person name="Yoshikawa H.-F."/>
            <person name="Zumstein E."/>
            <person name="Yoshikawa H."/>
            <person name="Danchin A."/>
        </authorList>
    </citation>
    <scope>NUCLEOTIDE SEQUENCE [LARGE SCALE GENOMIC DNA]</scope>
    <source>
        <strain>168</strain>
    </source>
</reference>
<reference key="4">
    <citation type="journal article" date="2009" name="Microbiology">
        <title>From a consortium sequence to a unified sequence: the Bacillus subtilis 168 reference genome a decade later.</title>
        <authorList>
            <person name="Barbe V."/>
            <person name="Cruveiller S."/>
            <person name="Kunst F."/>
            <person name="Lenoble P."/>
            <person name="Meurice G."/>
            <person name="Sekowska A."/>
            <person name="Vallenet D."/>
            <person name="Wang T."/>
            <person name="Moszer I."/>
            <person name="Medigue C."/>
            <person name="Danchin A."/>
        </authorList>
    </citation>
    <scope>SEQUENCE REVISION TO 444</scope>
</reference>
<reference key="5">
    <citation type="journal article" date="2001" name="J. Bacteriol.">
        <title>Comprehensive DNA microarray analysis of Bacillus subtilis two-component regulatory systems.</title>
        <authorList>
            <person name="Kobayashi K."/>
            <person name="Ogura M."/>
            <person name="Yamaguchi H."/>
            <person name="Yoshida K."/>
            <person name="Ogasawara N."/>
            <person name="Tanaka T."/>
            <person name="Fujita Y."/>
        </authorList>
    </citation>
    <scope>FUNCTION</scope>
</reference>
<reference key="6">
    <citation type="journal article" date="2001" name="Mol. Microbiol.">
        <title>A novel two-component regulatory system in Bacillus subtilis for the survival of severe secretion stress.</title>
        <authorList>
            <person name="Hyyrylaeinen H.-L."/>
            <person name="Bolhuis A."/>
            <person name="Darmon E."/>
            <person name="Muukkonen L."/>
            <person name="Koski P."/>
            <person name="Vitikainen M."/>
            <person name="Sarvas M."/>
            <person name="Pragai Z."/>
            <person name="Bron S."/>
            <person name="van Dijl J.M."/>
            <person name="Kontinen V.P."/>
        </authorList>
    </citation>
    <scope>CHARACTERIZATION</scope>
    <source>
        <strain>168</strain>
    </source>
</reference>
<name>CSSS_BACSU</name>
<evidence type="ECO:0000255" key="1"/>
<evidence type="ECO:0000255" key="2">
    <source>
        <dbReference type="PROSITE-ProRule" id="PRU00102"/>
    </source>
</evidence>
<evidence type="ECO:0000255" key="3">
    <source>
        <dbReference type="PROSITE-ProRule" id="PRU00107"/>
    </source>
</evidence>
<evidence type="ECO:0000269" key="4">
    <source>
    </source>
</evidence>
<evidence type="ECO:0000305" key="5"/>
<proteinExistence type="evidence at protein level"/>